<organism>
    <name type="scientific">Ruegeria sp. (strain TM1040)</name>
    <name type="common">Silicibacter sp.</name>
    <dbReference type="NCBI Taxonomy" id="292414"/>
    <lineage>
        <taxon>Bacteria</taxon>
        <taxon>Pseudomonadati</taxon>
        <taxon>Pseudomonadota</taxon>
        <taxon>Alphaproteobacteria</taxon>
        <taxon>Rhodobacterales</taxon>
        <taxon>Roseobacteraceae</taxon>
        <taxon>Ruegeria</taxon>
    </lineage>
</organism>
<accession>Q1GDC3</accession>
<comment type="function">
    <text evidence="1">Specifically methylates guanosine-37 in various tRNAs.</text>
</comment>
<comment type="catalytic activity">
    <reaction evidence="1">
        <text>guanosine(37) in tRNA + S-adenosyl-L-methionine = N(1)-methylguanosine(37) in tRNA + S-adenosyl-L-homocysteine + H(+)</text>
        <dbReference type="Rhea" id="RHEA:36899"/>
        <dbReference type="Rhea" id="RHEA-COMP:10145"/>
        <dbReference type="Rhea" id="RHEA-COMP:10147"/>
        <dbReference type="ChEBI" id="CHEBI:15378"/>
        <dbReference type="ChEBI" id="CHEBI:57856"/>
        <dbReference type="ChEBI" id="CHEBI:59789"/>
        <dbReference type="ChEBI" id="CHEBI:73542"/>
        <dbReference type="ChEBI" id="CHEBI:74269"/>
        <dbReference type="EC" id="2.1.1.228"/>
    </reaction>
</comment>
<comment type="subunit">
    <text evidence="1">Homodimer.</text>
</comment>
<comment type="subcellular location">
    <subcellularLocation>
        <location evidence="1">Cytoplasm</location>
    </subcellularLocation>
</comment>
<comment type="similarity">
    <text evidence="1">Belongs to the RNA methyltransferase TrmD family.</text>
</comment>
<comment type="sequence caution" evidence="2">
    <conflict type="erroneous initiation">
        <sequence resource="EMBL-CDS" id="ABF65343"/>
    </conflict>
</comment>
<reference key="1">
    <citation type="submission" date="2006-05" db="EMBL/GenBank/DDBJ databases">
        <title>Complete sequence of chromosome of Silicibacter sp. TM1040.</title>
        <authorList>
            <consortium name="US DOE Joint Genome Institute"/>
            <person name="Copeland A."/>
            <person name="Lucas S."/>
            <person name="Lapidus A."/>
            <person name="Barry K."/>
            <person name="Detter J.C."/>
            <person name="Glavina del Rio T."/>
            <person name="Hammon N."/>
            <person name="Israni S."/>
            <person name="Dalin E."/>
            <person name="Tice H."/>
            <person name="Pitluck S."/>
            <person name="Brettin T."/>
            <person name="Bruce D."/>
            <person name="Han C."/>
            <person name="Tapia R."/>
            <person name="Goodwin L."/>
            <person name="Thompson L.S."/>
            <person name="Gilna P."/>
            <person name="Schmutz J."/>
            <person name="Larimer F."/>
            <person name="Land M."/>
            <person name="Hauser L."/>
            <person name="Kyrpides N."/>
            <person name="Kim E."/>
            <person name="Belas R."/>
            <person name="Moran M.A."/>
            <person name="Buchan A."/>
            <person name="Gonzalez J.M."/>
            <person name="Schell M.A."/>
            <person name="Sun F."/>
            <person name="Richardson P."/>
        </authorList>
    </citation>
    <scope>NUCLEOTIDE SEQUENCE [LARGE SCALE GENOMIC DNA]</scope>
    <source>
        <strain>TM1040</strain>
    </source>
</reference>
<proteinExistence type="inferred from homology"/>
<evidence type="ECO:0000255" key="1">
    <source>
        <dbReference type="HAMAP-Rule" id="MF_00605"/>
    </source>
</evidence>
<evidence type="ECO:0000305" key="2"/>
<gene>
    <name evidence="1" type="primary">trmD</name>
    <name type="ordered locus">TM1040_2611</name>
</gene>
<name>TRMD_RUEST</name>
<sequence>MSDTPDLAGVWKAKILTLFPEAFPGVLGESLTGKALQQGLWQLETVDLRPFGIGKHKNVDDTPAGGGAGMVLRADVLGDAIEHAMQGTAGNWPLIYLSPRGRRMDQQMMQTFARCDGLTLLCGRFEGVDERVLEHYGIQEVSLGDFVMTGGELAAQALIDATVRLIPGVLGNQASTEEESFSSGLLEHPQYTRPADWKGRAIPDVLMSGHHGKIAEWRQDMSEKITQERRPDLWAAYQARKSKT</sequence>
<feature type="chain" id="PRO_0000257470" description="tRNA (guanine-N(1)-)-methyltransferase">
    <location>
        <begin position="1"/>
        <end position="244"/>
    </location>
</feature>
<feature type="binding site" evidence="1">
    <location>
        <position position="123"/>
    </location>
    <ligand>
        <name>S-adenosyl-L-methionine</name>
        <dbReference type="ChEBI" id="CHEBI:59789"/>
    </ligand>
</feature>
<feature type="binding site" evidence="1">
    <location>
        <begin position="143"/>
        <end position="148"/>
    </location>
    <ligand>
        <name>S-adenosyl-L-methionine</name>
        <dbReference type="ChEBI" id="CHEBI:59789"/>
    </ligand>
</feature>
<keyword id="KW-0963">Cytoplasm</keyword>
<keyword id="KW-0489">Methyltransferase</keyword>
<keyword id="KW-1185">Reference proteome</keyword>
<keyword id="KW-0949">S-adenosyl-L-methionine</keyword>
<keyword id="KW-0808">Transferase</keyword>
<keyword id="KW-0819">tRNA processing</keyword>
<protein>
    <recommendedName>
        <fullName evidence="1">tRNA (guanine-N(1)-)-methyltransferase</fullName>
        <ecNumber evidence="1">2.1.1.228</ecNumber>
    </recommendedName>
    <alternativeName>
        <fullName evidence="1">M1G-methyltransferase</fullName>
    </alternativeName>
    <alternativeName>
        <fullName evidence="1">tRNA [GM37] methyltransferase</fullName>
    </alternativeName>
</protein>
<dbReference type="EC" id="2.1.1.228" evidence="1"/>
<dbReference type="EMBL" id="CP000377">
    <property type="protein sequence ID" value="ABF65343.1"/>
    <property type="status" value="ALT_INIT"/>
    <property type="molecule type" value="Genomic_DNA"/>
</dbReference>
<dbReference type="RefSeq" id="WP_011539925.1">
    <property type="nucleotide sequence ID" value="NC_008044.1"/>
</dbReference>
<dbReference type="SMR" id="Q1GDC3"/>
<dbReference type="STRING" id="292414.TM1040_2611"/>
<dbReference type="KEGG" id="sit:TM1040_2611"/>
<dbReference type="eggNOG" id="COG0336">
    <property type="taxonomic scope" value="Bacteria"/>
</dbReference>
<dbReference type="HOGENOM" id="CLU_047363_0_1_5"/>
<dbReference type="OrthoDB" id="9807416at2"/>
<dbReference type="Proteomes" id="UP000000636">
    <property type="component" value="Chromosome"/>
</dbReference>
<dbReference type="GO" id="GO:0005829">
    <property type="term" value="C:cytosol"/>
    <property type="evidence" value="ECO:0007669"/>
    <property type="project" value="TreeGrafter"/>
</dbReference>
<dbReference type="GO" id="GO:0052906">
    <property type="term" value="F:tRNA (guanine(37)-N1)-methyltransferase activity"/>
    <property type="evidence" value="ECO:0007669"/>
    <property type="project" value="UniProtKB-UniRule"/>
</dbReference>
<dbReference type="GO" id="GO:0002939">
    <property type="term" value="P:tRNA N1-guanine methylation"/>
    <property type="evidence" value="ECO:0007669"/>
    <property type="project" value="TreeGrafter"/>
</dbReference>
<dbReference type="CDD" id="cd18080">
    <property type="entry name" value="TrmD-like"/>
    <property type="match status" value="1"/>
</dbReference>
<dbReference type="FunFam" id="3.40.1280.10:FF:000001">
    <property type="entry name" value="tRNA (guanine-N(1)-)-methyltransferase"/>
    <property type="match status" value="1"/>
</dbReference>
<dbReference type="Gene3D" id="3.40.1280.10">
    <property type="match status" value="1"/>
</dbReference>
<dbReference type="Gene3D" id="1.10.1270.20">
    <property type="entry name" value="tRNA(m1g37)methyltransferase, domain 2"/>
    <property type="match status" value="1"/>
</dbReference>
<dbReference type="HAMAP" id="MF_00605">
    <property type="entry name" value="TrmD"/>
    <property type="match status" value="1"/>
</dbReference>
<dbReference type="InterPro" id="IPR029028">
    <property type="entry name" value="Alpha/beta_knot_MTases"/>
</dbReference>
<dbReference type="InterPro" id="IPR023148">
    <property type="entry name" value="tRNA_m1G_MeTrfase_C_sf"/>
</dbReference>
<dbReference type="InterPro" id="IPR002649">
    <property type="entry name" value="tRNA_m1G_MeTrfase_TrmD"/>
</dbReference>
<dbReference type="InterPro" id="IPR029026">
    <property type="entry name" value="tRNA_m1G_MTases_N"/>
</dbReference>
<dbReference type="InterPro" id="IPR016009">
    <property type="entry name" value="tRNA_MeTrfase_TRMD/TRM10"/>
</dbReference>
<dbReference type="NCBIfam" id="NF000648">
    <property type="entry name" value="PRK00026.1"/>
    <property type="match status" value="1"/>
</dbReference>
<dbReference type="NCBIfam" id="TIGR00088">
    <property type="entry name" value="trmD"/>
    <property type="match status" value="1"/>
</dbReference>
<dbReference type="PANTHER" id="PTHR46417">
    <property type="entry name" value="TRNA (GUANINE-N(1)-)-METHYLTRANSFERASE"/>
    <property type="match status" value="1"/>
</dbReference>
<dbReference type="PANTHER" id="PTHR46417:SF1">
    <property type="entry name" value="TRNA (GUANINE-N(1)-)-METHYLTRANSFERASE"/>
    <property type="match status" value="1"/>
</dbReference>
<dbReference type="Pfam" id="PF01746">
    <property type="entry name" value="tRNA_m1G_MT"/>
    <property type="match status" value="1"/>
</dbReference>
<dbReference type="PIRSF" id="PIRSF000386">
    <property type="entry name" value="tRNA_mtase"/>
    <property type="match status" value="1"/>
</dbReference>
<dbReference type="SUPFAM" id="SSF75217">
    <property type="entry name" value="alpha/beta knot"/>
    <property type="match status" value="1"/>
</dbReference>